<name>RPOC2_BUXMI</name>
<geneLocation type="chloroplast"/>
<gene>
    <name evidence="1" type="primary">rpoC2</name>
</gene>
<accession>A6MM26</accession>
<proteinExistence type="inferred from homology"/>
<keyword id="KW-0150">Chloroplast</keyword>
<keyword id="KW-0240">DNA-directed RNA polymerase</keyword>
<keyword id="KW-0479">Metal-binding</keyword>
<keyword id="KW-0548">Nucleotidyltransferase</keyword>
<keyword id="KW-0934">Plastid</keyword>
<keyword id="KW-0804">Transcription</keyword>
<keyword id="KW-0808">Transferase</keyword>
<keyword id="KW-0862">Zinc</keyword>
<comment type="function">
    <text evidence="1">DNA-dependent RNA polymerase catalyzes the transcription of DNA into RNA using the four ribonucleoside triphosphates as substrates.</text>
</comment>
<comment type="catalytic activity">
    <reaction evidence="1">
        <text>RNA(n) + a ribonucleoside 5'-triphosphate = RNA(n+1) + diphosphate</text>
        <dbReference type="Rhea" id="RHEA:21248"/>
        <dbReference type="Rhea" id="RHEA-COMP:14527"/>
        <dbReference type="Rhea" id="RHEA-COMP:17342"/>
        <dbReference type="ChEBI" id="CHEBI:33019"/>
        <dbReference type="ChEBI" id="CHEBI:61557"/>
        <dbReference type="ChEBI" id="CHEBI:140395"/>
        <dbReference type="EC" id="2.7.7.6"/>
    </reaction>
</comment>
<comment type="cofactor">
    <cofactor evidence="1">
        <name>Zn(2+)</name>
        <dbReference type="ChEBI" id="CHEBI:29105"/>
    </cofactor>
    <text evidence="1">Binds 1 Zn(2+) ion per subunit.</text>
</comment>
<comment type="subunit">
    <text evidence="1">In plastids the minimal PEP RNA polymerase catalytic core is composed of four subunits: alpha, beta, beta', and beta''. When a (nuclear-encoded) sigma factor is associated with the core the holoenzyme is formed, which can initiate transcription.</text>
</comment>
<comment type="subcellular location">
    <subcellularLocation>
        <location evidence="1">Plastid</location>
        <location evidence="1">Chloroplast</location>
    </subcellularLocation>
</comment>
<comment type="similarity">
    <text evidence="1">Belongs to the RNA polymerase beta' chain family. RpoC2 subfamily.</text>
</comment>
<evidence type="ECO:0000255" key="1">
    <source>
        <dbReference type="HAMAP-Rule" id="MF_01324"/>
    </source>
</evidence>
<protein>
    <recommendedName>
        <fullName evidence="1">DNA-directed RNA polymerase subunit beta''</fullName>
        <ecNumber evidence="1">2.7.7.6</ecNumber>
    </recommendedName>
    <alternativeName>
        <fullName evidence="1">PEP</fullName>
    </alternativeName>
    <alternativeName>
        <fullName evidence="1">Plastid-encoded RNA polymerase subunit beta''</fullName>
        <shortName evidence="1">RNA polymerase subunit beta''</shortName>
    </alternativeName>
</protein>
<dbReference type="EC" id="2.7.7.6" evidence="1"/>
<dbReference type="EMBL" id="EF380351">
    <property type="protein sequence ID" value="ABQ45239.1"/>
    <property type="molecule type" value="Genomic_DNA"/>
</dbReference>
<dbReference type="RefSeq" id="YP_001294174.1">
    <property type="nucleotide sequence ID" value="NC_009599.1"/>
</dbReference>
<dbReference type="SMR" id="A6MM26"/>
<dbReference type="GeneID" id="5236945"/>
<dbReference type="GO" id="GO:0009507">
    <property type="term" value="C:chloroplast"/>
    <property type="evidence" value="ECO:0007669"/>
    <property type="project" value="UniProtKB-SubCell"/>
</dbReference>
<dbReference type="GO" id="GO:0000428">
    <property type="term" value="C:DNA-directed RNA polymerase complex"/>
    <property type="evidence" value="ECO:0007669"/>
    <property type="project" value="UniProtKB-KW"/>
</dbReference>
<dbReference type="GO" id="GO:0005739">
    <property type="term" value="C:mitochondrion"/>
    <property type="evidence" value="ECO:0007669"/>
    <property type="project" value="GOC"/>
</dbReference>
<dbReference type="GO" id="GO:0003677">
    <property type="term" value="F:DNA binding"/>
    <property type="evidence" value="ECO:0007669"/>
    <property type="project" value="UniProtKB-UniRule"/>
</dbReference>
<dbReference type="GO" id="GO:0003899">
    <property type="term" value="F:DNA-directed RNA polymerase activity"/>
    <property type="evidence" value="ECO:0007669"/>
    <property type="project" value="UniProtKB-UniRule"/>
</dbReference>
<dbReference type="GO" id="GO:0008270">
    <property type="term" value="F:zinc ion binding"/>
    <property type="evidence" value="ECO:0007669"/>
    <property type="project" value="UniProtKB-UniRule"/>
</dbReference>
<dbReference type="GO" id="GO:0006351">
    <property type="term" value="P:DNA-templated transcription"/>
    <property type="evidence" value="ECO:0007669"/>
    <property type="project" value="UniProtKB-UniRule"/>
</dbReference>
<dbReference type="CDD" id="cd02655">
    <property type="entry name" value="RNAP_beta'_C"/>
    <property type="match status" value="1"/>
</dbReference>
<dbReference type="FunFam" id="1.10.132.30:FF:000002">
    <property type="entry name" value="DNA-directed RNA polymerase subunit beta"/>
    <property type="match status" value="1"/>
</dbReference>
<dbReference type="FunFam" id="1.10.1790.20:FF:000002">
    <property type="entry name" value="DNA-directed RNA polymerase subunit beta"/>
    <property type="match status" value="1"/>
</dbReference>
<dbReference type="Gene3D" id="1.10.132.30">
    <property type="match status" value="1"/>
</dbReference>
<dbReference type="Gene3D" id="1.10.150.390">
    <property type="match status" value="1"/>
</dbReference>
<dbReference type="Gene3D" id="1.10.1790.20">
    <property type="match status" value="1"/>
</dbReference>
<dbReference type="Gene3D" id="1.10.274.100">
    <property type="entry name" value="RNA polymerase Rpb1, domain 3"/>
    <property type="match status" value="1"/>
</dbReference>
<dbReference type="HAMAP" id="MF_01324">
    <property type="entry name" value="RNApol_bact_RpoC2"/>
    <property type="match status" value="1"/>
</dbReference>
<dbReference type="InterPro" id="IPR012756">
    <property type="entry name" value="DNA-dir_RpoC2_beta_pp"/>
</dbReference>
<dbReference type="InterPro" id="IPR050254">
    <property type="entry name" value="RNA_pol_beta''_euk"/>
</dbReference>
<dbReference type="InterPro" id="IPR042102">
    <property type="entry name" value="RNA_pol_Rpb1_3_sf"/>
</dbReference>
<dbReference type="InterPro" id="IPR007083">
    <property type="entry name" value="RNA_pol_Rpb1_4"/>
</dbReference>
<dbReference type="InterPro" id="IPR007081">
    <property type="entry name" value="RNA_pol_Rpb1_5"/>
</dbReference>
<dbReference type="InterPro" id="IPR038120">
    <property type="entry name" value="Rpb1_funnel_sf"/>
</dbReference>
<dbReference type="NCBIfam" id="TIGR02388">
    <property type="entry name" value="rpoC2_cyan"/>
    <property type="match status" value="1"/>
</dbReference>
<dbReference type="PANTHER" id="PTHR34995">
    <property type="entry name" value="DNA-DIRECTED RNA POLYMERASE SUBUNIT BETA"/>
    <property type="match status" value="1"/>
</dbReference>
<dbReference type="PANTHER" id="PTHR34995:SF1">
    <property type="entry name" value="DNA-DIRECTED RNA POLYMERASE SUBUNIT BETA"/>
    <property type="match status" value="1"/>
</dbReference>
<dbReference type="Pfam" id="PF05000">
    <property type="entry name" value="RNA_pol_Rpb1_4"/>
    <property type="match status" value="1"/>
</dbReference>
<dbReference type="Pfam" id="PF04998">
    <property type="entry name" value="RNA_pol_Rpb1_5"/>
    <property type="match status" value="2"/>
</dbReference>
<dbReference type="SUPFAM" id="SSF64484">
    <property type="entry name" value="beta and beta-prime subunits of DNA dependent RNA-polymerase"/>
    <property type="match status" value="1"/>
</dbReference>
<sequence>MEVLMAERADLVFHNKVIDGTAMKRLISRLIDHFGMAYTSHILDQVKTLGFQQATATSISLGIDDLLTTPSKRWLVQDAEQQSFILEKHHHYGNVHAVEKLRQSIEIWYATSEYLRQEMNTNFRMTDPSNPVHIMSFSGARGNPSQVHQLVGMRGLMSDPQGQMIDLPIQSNLREGLSLTEYIISCYGARKGVVDTAVRTSDAGYLTRRLVEVVQHIVVRRTDCGTIRGIYVTSRNGMMTERIFIQTLIGRVLADDIYMGPRCIATRNQDVGIELVNRFITFRAQPISIRTPFTCRSTSWICRLCYGRSPTHGDLVELGEAVGIIAGQSIGEPGTQLTLRTFHTGGVFTGGTAEHVRAPFNGKIKFNEDLVHPTRTRHGHPAFLCYIDLYVTIESQDIIHNVNIPQKSFLLVQNNQYVESEQVIAEIRAETSTFNFKERVRKHIYSDSEGEMHWSTDVYHAPEYTYGNVHLLPKTSHLWVLSGGPCRSRIVPFSLHKDQDQMNVHSLSAERRYISNLSATNDQVRHKLFSSDPSGKRGGSILDYSGPNRIICNGHLNFIYPTILHENSDLLAKRRRNRFILPLQSNQEREKELMPCSGISIEIPINGIFRRNSILAYFDDPLYRRKSSGITKYGTIEVHSIVKKEDLIEYRGAKEFRSKYQMKVDRFFFIPEEVHILPGSSYIMVRNNSIIGVDTRITLNIRSRVGGLVRVERKKKNIELKIFSGDIHFPGETDKISRHSGILIPPGTEKKKSKESKKKLKNWIYVQRITPTKKKYFVLVRPVVTYEIADGINLVTLFPQDLLQERDDVQLRVVNYILYENGKPIRGISDTSIQLVRTCLVLNCDQYKNGSSMEEIHASFVEVRTNGLIRYFLRMDLVKSPISYIVKRNDPSSSGLIPDNGSDRNNINPFYSIYYKARIQQSLSQHQGTIRTLLNRNKECQSLIILSSSNCSRMHPFNGLKYHNVTKESSKGDPLIPIKNWLGPLGTVPKIANFYSFYHLITHNQILVNKYLILNNLKQIFQVLKYYLMDENGRIYNPDRCRNIIFNPFNFNWYFLHHDYCEETSTIISPGQFICENVCISKNGPHLKSGQVLIVHIDSLVIRSAKPYLATPGATVHGHYGEILYEGDTLVTFIYEKSRSGDITQGLPKVEQVLEVRSIDSISMNLEKRVEGWNERIPRILGIPWGFLIGAELTIAQSRISLVNKIQKVYRSQGVQIHNRHIEIIVRQITSKVLVSEEGMSNVFSPGELIGLLRAERTGRALEEAICYRAVLLGITRASLNTQSFISEASFQETARVLAKAALRGRIDWLKGLKENVVLGGLIPVGTGFKVLVHRSRQHNNIPLETKKKNIFEGEMRDILFHHRKFKLLNYCIPKNFHDTPEQSFTGFNDS</sequence>
<feature type="chain" id="PRO_0000353548" description="DNA-directed RNA polymerase subunit beta''">
    <location>
        <begin position="1"/>
        <end position="1391"/>
    </location>
</feature>
<feature type="binding site" evidence="1">
    <location>
        <position position="224"/>
    </location>
    <ligand>
        <name>Zn(2+)</name>
        <dbReference type="ChEBI" id="CHEBI:29105"/>
    </ligand>
</feature>
<feature type="binding site" evidence="1">
    <location>
        <position position="295"/>
    </location>
    <ligand>
        <name>Zn(2+)</name>
        <dbReference type="ChEBI" id="CHEBI:29105"/>
    </ligand>
</feature>
<feature type="binding site" evidence="1">
    <location>
        <position position="302"/>
    </location>
    <ligand>
        <name>Zn(2+)</name>
        <dbReference type="ChEBI" id="CHEBI:29105"/>
    </ligand>
</feature>
<feature type="binding site" evidence="1">
    <location>
        <position position="305"/>
    </location>
    <ligand>
        <name>Zn(2+)</name>
        <dbReference type="ChEBI" id="CHEBI:29105"/>
    </ligand>
</feature>
<reference key="1">
    <citation type="journal article" date="2007" name="Mol. Phylogenet. Evol.">
        <title>Phylogenetic and evolutionary implications of complete chloroplast genome sequences of four early-diverging angiosperms: Buxus (Buxaceae), Chloranthus (Chloranthaceae), Dioscorea (Dioscoreaceae), and Illicium (Schisandraceae).</title>
        <authorList>
            <person name="Hansen D.R."/>
            <person name="Dastidar S.G."/>
            <person name="Cai Z."/>
            <person name="Penaflor C."/>
            <person name="Kuehl J.V."/>
            <person name="Boore J.L."/>
            <person name="Jansen R.K."/>
        </authorList>
    </citation>
    <scope>NUCLEOTIDE SEQUENCE [LARGE SCALE GENOMIC DNA]</scope>
</reference>
<organism>
    <name type="scientific">Buxus microphylla</name>
    <name type="common">Littleleaf boxwood</name>
    <name type="synonym">Japanese boxwood</name>
    <dbReference type="NCBI Taxonomy" id="153571"/>
    <lineage>
        <taxon>Eukaryota</taxon>
        <taxon>Viridiplantae</taxon>
        <taxon>Streptophyta</taxon>
        <taxon>Embryophyta</taxon>
        <taxon>Tracheophyta</taxon>
        <taxon>Spermatophyta</taxon>
        <taxon>Magnoliopsida</taxon>
        <taxon>Buxales</taxon>
        <taxon>Buxaceae</taxon>
        <taxon>Buxus</taxon>
    </lineage>
</organism>